<feature type="chain" id="PRO_0000103880" description="Putative F420H(2)-dependent quinone reductase Mb1584">
    <location>
        <begin position="1"/>
        <end position="148"/>
    </location>
</feature>
<feature type="binding site" evidence="1">
    <location>
        <begin position="46"/>
        <end position="48"/>
    </location>
    <ligand>
        <name>coenzyme F420-(gamma-Glu)n</name>
        <dbReference type="ChEBI" id="CHEBI:133980"/>
    </ligand>
</feature>
<feature type="binding site" evidence="1">
    <location>
        <begin position="52"/>
        <end position="57"/>
    </location>
    <ligand>
        <name>coenzyme F420-(gamma-Glu)n</name>
        <dbReference type="ChEBI" id="CHEBI:133980"/>
    </ligand>
</feature>
<feature type="binding site" evidence="1">
    <location>
        <begin position="68"/>
        <end position="71"/>
    </location>
    <ligand>
        <name>coenzyme F420-(gamma-Glu)n</name>
        <dbReference type="ChEBI" id="CHEBI:133980"/>
    </ligand>
</feature>
<feature type="binding site" evidence="1">
    <location>
        <begin position="79"/>
        <end position="83"/>
    </location>
    <ligand>
        <name>coenzyme F420-(gamma-Glu)n</name>
        <dbReference type="ChEBI" id="CHEBI:133980"/>
    </ligand>
</feature>
<feature type="binding site" evidence="1">
    <location>
        <position position="125"/>
    </location>
    <ligand>
        <name>coenzyme F420-(gamma-Glu)n</name>
        <dbReference type="ChEBI" id="CHEBI:133980"/>
    </ligand>
</feature>
<proteinExistence type="inferred from homology"/>
<sequence length="148" mass="16348">MPLSGEYAPSPLDWSREQADTYMKSGGTEGTQLQGKPVILLTTVGAKTGKLRKTPLMRVEHDGQYAIVASLGGAPKNPVWYHNVVKNPRVELQDGTVTGDYDAREVFGDEKAIWWQRAVAVWPDYASYQTKTDRQIPVFVLTPVRAGG</sequence>
<evidence type="ECO:0000250" key="1">
    <source>
        <dbReference type="UniProtKB" id="P9WP15"/>
    </source>
</evidence>
<evidence type="ECO:0000305" key="2"/>
<dbReference type="EC" id="1.1.98.-"/>
<dbReference type="EMBL" id="LT708304">
    <property type="protein sequence ID" value="SIU00187.1"/>
    <property type="molecule type" value="Genomic_DNA"/>
</dbReference>
<dbReference type="RefSeq" id="NP_855236.1">
    <property type="nucleotide sequence ID" value="NC_002945.3"/>
</dbReference>
<dbReference type="RefSeq" id="WP_003407780.1">
    <property type="nucleotide sequence ID" value="NC_002945.4"/>
</dbReference>
<dbReference type="SMR" id="P64876"/>
<dbReference type="KEGG" id="mbo:BQ2027_MB1584"/>
<dbReference type="PATRIC" id="fig|233413.5.peg.1731"/>
<dbReference type="Proteomes" id="UP000001419">
    <property type="component" value="Chromosome"/>
</dbReference>
<dbReference type="GO" id="GO:0005886">
    <property type="term" value="C:plasma membrane"/>
    <property type="evidence" value="ECO:0007669"/>
    <property type="project" value="UniProtKB-SubCell"/>
</dbReference>
<dbReference type="GO" id="GO:0070967">
    <property type="term" value="F:coenzyme F420 binding"/>
    <property type="evidence" value="ECO:0007669"/>
    <property type="project" value="TreeGrafter"/>
</dbReference>
<dbReference type="GO" id="GO:0016491">
    <property type="term" value="F:oxidoreductase activity"/>
    <property type="evidence" value="ECO:0007669"/>
    <property type="project" value="UniProtKB-KW"/>
</dbReference>
<dbReference type="FunFam" id="2.30.110.10:FF:000018">
    <property type="entry name" value="Deazaflavin-dependent oxidoreductase, nitroreductase family"/>
    <property type="match status" value="1"/>
</dbReference>
<dbReference type="Gene3D" id="2.30.110.10">
    <property type="entry name" value="Electron Transport, Fmn-binding Protein, Chain A"/>
    <property type="match status" value="1"/>
</dbReference>
<dbReference type="InterPro" id="IPR004378">
    <property type="entry name" value="F420H2_quin_Rdtase"/>
</dbReference>
<dbReference type="InterPro" id="IPR012349">
    <property type="entry name" value="Split_barrel_FMN-bd"/>
</dbReference>
<dbReference type="NCBIfam" id="TIGR00026">
    <property type="entry name" value="hi_GC_TIGR00026"/>
    <property type="match status" value="1"/>
</dbReference>
<dbReference type="PANTHER" id="PTHR39428:SF3">
    <property type="entry name" value="DEAZAFLAVIN-DEPENDENT NITROREDUCTASE"/>
    <property type="match status" value="1"/>
</dbReference>
<dbReference type="PANTHER" id="PTHR39428">
    <property type="entry name" value="F420H(2)-DEPENDENT QUINONE REDUCTASE RV1261C"/>
    <property type="match status" value="1"/>
</dbReference>
<dbReference type="Pfam" id="PF04075">
    <property type="entry name" value="F420H2_quin_red"/>
    <property type="match status" value="1"/>
</dbReference>
<dbReference type="SUPFAM" id="SSF50475">
    <property type="entry name" value="FMN-binding split barrel"/>
    <property type="match status" value="1"/>
</dbReference>
<name>FQR84_MYCBO</name>
<reference key="1">
    <citation type="journal article" date="2003" name="Proc. Natl. Acad. Sci. U.S.A.">
        <title>The complete genome sequence of Mycobacterium bovis.</title>
        <authorList>
            <person name="Garnier T."/>
            <person name="Eiglmeier K."/>
            <person name="Camus J.-C."/>
            <person name="Medina N."/>
            <person name="Mansoor H."/>
            <person name="Pryor M."/>
            <person name="Duthoy S."/>
            <person name="Grondin S."/>
            <person name="Lacroix C."/>
            <person name="Monsempe C."/>
            <person name="Simon S."/>
            <person name="Harris B."/>
            <person name="Atkin R."/>
            <person name="Doggett J."/>
            <person name="Mayes R."/>
            <person name="Keating L."/>
            <person name="Wheeler P.R."/>
            <person name="Parkhill J."/>
            <person name="Barrell B.G."/>
            <person name="Cole S.T."/>
            <person name="Gordon S.V."/>
            <person name="Hewinson R.G."/>
        </authorList>
    </citation>
    <scope>NUCLEOTIDE SEQUENCE [LARGE SCALE GENOMIC DNA]</scope>
    <source>
        <strain>ATCC BAA-935 / AF2122/97</strain>
    </source>
</reference>
<reference key="2">
    <citation type="journal article" date="2017" name="Genome Announc.">
        <title>Updated reference genome sequence and annotation of Mycobacterium bovis AF2122/97.</title>
        <authorList>
            <person name="Malone K.M."/>
            <person name="Farrell D."/>
            <person name="Stuber T.P."/>
            <person name="Schubert O.T."/>
            <person name="Aebersold R."/>
            <person name="Robbe-Austerman S."/>
            <person name="Gordon S.V."/>
        </authorList>
    </citation>
    <scope>NUCLEOTIDE SEQUENCE [LARGE SCALE GENOMIC DNA]</scope>
    <scope>GENOME REANNOTATION</scope>
    <source>
        <strain>ATCC BAA-935 / AF2122/97</strain>
    </source>
</reference>
<comment type="function">
    <text evidence="1">Involved in a F420-dependent anti-oxidant mechanism that protects M.bovis against oxidative stress and bactericidal agents. Catalyzes the F420H(2)-dependent two-electron reduction of quinones to dihydroquinones, thereby preventing the formation of cytotoxic semiquinones obtained by the one-electron reduction pathway.</text>
</comment>
<comment type="catalytic activity">
    <reaction evidence="1">
        <text>oxidized coenzyme F420-(gamma-L-Glu)(n) + a quinol + H(+) = reduced coenzyme F420-(gamma-L-Glu)(n) + a quinone</text>
        <dbReference type="Rhea" id="RHEA:39663"/>
        <dbReference type="Rhea" id="RHEA-COMP:12939"/>
        <dbReference type="Rhea" id="RHEA-COMP:14378"/>
        <dbReference type="ChEBI" id="CHEBI:15378"/>
        <dbReference type="ChEBI" id="CHEBI:24646"/>
        <dbReference type="ChEBI" id="CHEBI:132124"/>
        <dbReference type="ChEBI" id="CHEBI:133980"/>
        <dbReference type="ChEBI" id="CHEBI:139511"/>
    </reaction>
</comment>
<comment type="subcellular location">
    <subcellularLocation>
        <location evidence="1">Cell membrane</location>
        <topology evidence="1">Peripheral membrane protein</topology>
    </subcellularLocation>
</comment>
<comment type="similarity">
    <text evidence="2">Belongs to the F420H(2)-dependent quinone reductase family.</text>
</comment>
<gene>
    <name type="ordered locus">BQ2027_MB1584</name>
</gene>
<accession>P64876</accession>
<accession>A0A1R3XYP7</accession>
<accession>Q10772</accession>
<accession>X2BHX8</accession>
<organism>
    <name type="scientific">Mycobacterium bovis (strain ATCC BAA-935 / AF2122/97)</name>
    <dbReference type="NCBI Taxonomy" id="233413"/>
    <lineage>
        <taxon>Bacteria</taxon>
        <taxon>Bacillati</taxon>
        <taxon>Actinomycetota</taxon>
        <taxon>Actinomycetes</taxon>
        <taxon>Mycobacteriales</taxon>
        <taxon>Mycobacteriaceae</taxon>
        <taxon>Mycobacterium</taxon>
        <taxon>Mycobacterium tuberculosis complex</taxon>
    </lineage>
</organism>
<keyword id="KW-1003">Cell membrane</keyword>
<keyword id="KW-0472">Membrane</keyword>
<keyword id="KW-0560">Oxidoreductase</keyword>
<keyword id="KW-1185">Reference proteome</keyword>
<protein>
    <recommendedName>
        <fullName evidence="2">Putative F420H(2)-dependent quinone reductase Mb1584</fullName>
        <shortName>Fqr</shortName>
        <ecNumber>1.1.98.-</ecNumber>
    </recommendedName>
</protein>